<sequence length="96" mass="10312">MNIRPLHDRVIIKREEVETRSAGGIVLTGSAATKSTRAKVLAVGKGRILENGTVQPLDVKVGDTVIFNDGYGVKAEKIDGEEVLIISENDILAIVE</sequence>
<accession>Q4QN06</accession>
<evidence type="ECO:0000255" key="1">
    <source>
        <dbReference type="HAMAP-Rule" id="MF_00580"/>
    </source>
</evidence>
<proteinExistence type="inferred from homology"/>
<organism>
    <name type="scientific">Haemophilus influenzae (strain 86-028NP)</name>
    <dbReference type="NCBI Taxonomy" id="281310"/>
    <lineage>
        <taxon>Bacteria</taxon>
        <taxon>Pseudomonadati</taxon>
        <taxon>Pseudomonadota</taxon>
        <taxon>Gammaproteobacteria</taxon>
        <taxon>Pasteurellales</taxon>
        <taxon>Pasteurellaceae</taxon>
        <taxon>Haemophilus</taxon>
    </lineage>
</organism>
<comment type="function">
    <text evidence="1">Together with the chaperonin GroEL, plays an essential role in assisting protein folding. The GroEL-GroES system forms a nano-cage that allows encapsulation of the non-native substrate proteins and provides a physical environment optimized to promote and accelerate protein folding. GroES binds to the apical surface of the GroEL ring, thereby capping the opening of the GroEL channel.</text>
</comment>
<comment type="subunit">
    <text evidence="1">Heptamer of 7 subunits arranged in a ring. Interacts with the chaperonin GroEL.</text>
</comment>
<comment type="subcellular location">
    <subcellularLocation>
        <location evidence="1">Cytoplasm</location>
    </subcellularLocation>
</comment>
<comment type="similarity">
    <text evidence="1">Belongs to the GroES chaperonin family.</text>
</comment>
<dbReference type="EMBL" id="CP000057">
    <property type="protein sequence ID" value="AAX87591.1"/>
    <property type="molecule type" value="Genomic_DNA"/>
</dbReference>
<dbReference type="RefSeq" id="WP_005717461.1">
    <property type="nucleotide sequence ID" value="NC_007146.2"/>
</dbReference>
<dbReference type="SMR" id="Q4QN06"/>
<dbReference type="KEGG" id="hit:NTHI0668"/>
<dbReference type="HOGENOM" id="CLU_132825_1_1_6"/>
<dbReference type="Proteomes" id="UP000002525">
    <property type="component" value="Chromosome"/>
</dbReference>
<dbReference type="GO" id="GO:0005737">
    <property type="term" value="C:cytoplasm"/>
    <property type="evidence" value="ECO:0007669"/>
    <property type="project" value="UniProtKB-SubCell"/>
</dbReference>
<dbReference type="GO" id="GO:0005524">
    <property type="term" value="F:ATP binding"/>
    <property type="evidence" value="ECO:0007669"/>
    <property type="project" value="InterPro"/>
</dbReference>
<dbReference type="GO" id="GO:0046872">
    <property type="term" value="F:metal ion binding"/>
    <property type="evidence" value="ECO:0007669"/>
    <property type="project" value="TreeGrafter"/>
</dbReference>
<dbReference type="GO" id="GO:0044183">
    <property type="term" value="F:protein folding chaperone"/>
    <property type="evidence" value="ECO:0007669"/>
    <property type="project" value="InterPro"/>
</dbReference>
<dbReference type="GO" id="GO:0051087">
    <property type="term" value="F:protein-folding chaperone binding"/>
    <property type="evidence" value="ECO:0007669"/>
    <property type="project" value="TreeGrafter"/>
</dbReference>
<dbReference type="GO" id="GO:0051082">
    <property type="term" value="F:unfolded protein binding"/>
    <property type="evidence" value="ECO:0007669"/>
    <property type="project" value="TreeGrafter"/>
</dbReference>
<dbReference type="GO" id="GO:0051085">
    <property type="term" value="P:chaperone cofactor-dependent protein refolding"/>
    <property type="evidence" value="ECO:0007669"/>
    <property type="project" value="TreeGrafter"/>
</dbReference>
<dbReference type="CDD" id="cd00320">
    <property type="entry name" value="cpn10"/>
    <property type="match status" value="1"/>
</dbReference>
<dbReference type="FunFam" id="2.30.33.40:FF:000001">
    <property type="entry name" value="10 kDa chaperonin"/>
    <property type="match status" value="1"/>
</dbReference>
<dbReference type="Gene3D" id="2.30.33.40">
    <property type="entry name" value="GroES chaperonin"/>
    <property type="match status" value="1"/>
</dbReference>
<dbReference type="HAMAP" id="MF_00580">
    <property type="entry name" value="CH10"/>
    <property type="match status" value="1"/>
</dbReference>
<dbReference type="InterPro" id="IPR020818">
    <property type="entry name" value="Chaperonin_GroES"/>
</dbReference>
<dbReference type="InterPro" id="IPR037124">
    <property type="entry name" value="Chaperonin_GroES_sf"/>
</dbReference>
<dbReference type="InterPro" id="IPR018369">
    <property type="entry name" value="Chaprnonin_Cpn10_CS"/>
</dbReference>
<dbReference type="InterPro" id="IPR011032">
    <property type="entry name" value="GroES-like_sf"/>
</dbReference>
<dbReference type="NCBIfam" id="NF001526">
    <property type="entry name" value="PRK00364.1-1"/>
    <property type="match status" value="1"/>
</dbReference>
<dbReference type="NCBIfam" id="NF001531">
    <property type="entry name" value="PRK00364.2-2"/>
    <property type="match status" value="1"/>
</dbReference>
<dbReference type="PANTHER" id="PTHR10772">
    <property type="entry name" value="10 KDA HEAT SHOCK PROTEIN"/>
    <property type="match status" value="1"/>
</dbReference>
<dbReference type="PANTHER" id="PTHR10772:SF58">
    <property type="entry name" value="CO-CHAPERONIN GROES"/>
    <property type="match status" value="1"/>
</dbReference>
<dbReference type="Pfam" id="PF00166">
    <property type="entry name" value="Cpn10"/>
    <property type="match status" value="1"/>
</dbReference>
<dbReference type="PRINTS" id="PR00297">
    <property type="entry name" value="CHAPERONIN10"/>
</dbReference>
<dbReference type="SMART" id="SM00883">
    <property type="entry name" value="Cpn10"/>
    <property type="match status" value="1"/>
</dbReference>
<dbReference type="SUPFAM" id="SSF50129">
    <property type="entry name" value="GroES-like"/>
    <property type="match status" value="1"/>
</dbReference>
<dbReference type="PROSITE" id="PS00681">
    <property type="entry name" value="CHAPERONINS_CPN10"/>
    <property type="match status" value="1"/>
</dbReference>
<name>CH10_HAEI8</name>
<feature type="chain" id="PRO_0000174762" description="Co-chaperonin GroES">
    <location>
        <begin position="1"/>
        <end position="96"/>
    </location>
</feature>
<gene>
    <name evidence="1" type="primary">groES</name>
    <name evidence="1" type="synonym">groS</name>
    <name type="ordered locus">NTHI0668</name>
</gene>
<keyword id="KW-0143">Chaperone</keyword>
<keyword id="KW-0963">Cytoplasm</keyword>
<protein>
    <recommendedName>
        <fullName evidence="1">Co-chaperonin GroES</fullName>
    </recommendedName>
    <alternativeName>
        <fullName evidence="1">10 kDa chaperonin</fullName>
    </alternativeName>
    <alternativeName>
        <fullName evidence="1">Chaperonin-10</fullName>
        <shortName evidence="1">Cpn10</shortName>
    </alternativeName>
</protein>
<reference key="1">
    <citation type="journal article" date="2005" name="J. Bacteriol.">
        <title>Genomic sequence of an otitis media isolate of nontypeable Haemophilus influenzae: comparative study with H. influenzae serotype d, strain KW20.</title>
        <authorList>
            <person name="Harrison A."/>
            <person name="Dyer D.W."/>
            <person name="Gillaspy A."/>
            <person name="Ray W.C."/>
            <person name="Mungur R."/>
            <person name="Carson M.B."/>
            <person name="Zhong H."/>
            <person name="Gipson J."/>
            <person name="Gipson M."/>
            <person name="Johnson L.S."/>
            <person name="Lewis L."/>
            <person name="Bakaletz L.O."/>
            <person name="Munson R.S. Jr."/>
        </authorList>
    </citation>
    <scope>NUCLEOTIDE SEQUENCE [LARGE SCALE GENOMIC DNA]</scope>
    <source>
        <strain>86-028NP</strain>
    </source>
</reference>